<gene>
    <name type="primary">RAB11C</name>
</gene>
<proteinExistence type="evidence at transcript level"/>
<dbReference type="EMBL" id="Z73951">
    <property type="protein sequence ID" value="CAA98179.1"/>
    <property type="molecule type" value="mRNA"/>
</dbReference>
<dbReference type="SMR" id="Q40193"/>
<dbReference type="GO" id="GO:0005886">
    <property type="term" value="C:plasma membrane"/>
    <property type="evidence" value="ECO:0007669"/>
    <property type="project" value="UniProtKB-SubCell"/>
</dbReference>
<dbReference type="GO" id="GO:0005525">
    <property type="term" value="F:GTP binding"/>
    <property type="evidence" value="ECO:0007669"/>
    <property type="project" value="UniProtKB-KW"/>
</dbReference>
<dbReference type="GO" id="GO:0003924">
    <property type="term" value="F:GTPase activity"/>
    <property type="evidence" value="ECO:0007669"/>
    <property type="project" value="InterPro"/>
</dbReference>
<dbReference type="CDD" id="cd01868">
    <property type="entry name" value="Rab11_like"/>
    <property type="match status" value="1"/>
</dbReference>
<dbReference type="FunFam" id="3.40.50.300:FF:000067">
    <property type="entry name" value="ras-related protein RABA1f"/>
    <property type="match status" value="1"/>
</dbReference>
<dbReference type="Gene3D" id="3.40.50.300">
    <property type="entry name" value="P-loop containing nucleotide triphosphate hydrolases"/>
    <property type="match status" value="1"/>
</dbReference>
<dbReference type="InterPro" id="IPR027417">
    <property type="entry name" value="P-loop_NTPase"/>
</dbReference>
<dbReference type="InterPro" id="IPR050209">
    <property type="entry name" value="Rab_GTPases_membrane_traffic"/>
</dbReference>
<dbReference type="InterPro" id="IPR005225">
    <property type="entry name" value="Small_GTP-bd"/>
</dbReference>
<dbReference type="InterPro" id="IPR001806">
    <property type="entry name" value="Small_GTPase"/>
</dbReference>
<dbReference type="NCBIfam" id="TIGR00231">
    <property type="entry name" value="small_GTP"/>
    <property type="match status" value="1"/>
</dbReference>
<dbReference type="PANTHER" id="PTHR47979">
    <property type="entry name" value="DRAB11-RELATED"/>
    <property type="match status" value="1"/>
</dbReference>
<dbReference type="Pfam" id="PF00071">
    <property type="entry name" value="Ras"/>
    <property type="match status" value="1"/>
</dbReference>
<dbReference type="PRINTS" id="PR00449">
    <property type="entry name" value="RASTRNSFRMNG"/>
</dbReference>
<dbReference type="SMART" id="SM00177">
    <property type="entry name" value="ARF"/>
    <property type="match status" value="1"/>
</dbReference>
<dbReference type="SMART" id="SM00175">
    <property type="entry name" value="RAB"/>
    <property type="match status" value="1"/>
</dbReference>
<dbReference type="SMART" id="SM00176">
    <property type="entry name" value="RAN"/>
    <property type="match status" value="1"/>
</dbReference>
<dbReference type="SMART" id="SM00173">
    <property type="entry name" value="RAS"/>
    <property type="match status" value="1"/>
</dbReference>
<dbReference type="SMART" id="SM00174">
    <property type="entry name" value="RHO"/>
    <property type="match status" value="1"/>
</dbReference>
<dbReference type="SUPFAM" id="SSF52540">
    <property type="entry name" value="P-loop containing nucleoside triphosphate hydrolases"/>
    <property type="match status" value="1"/>
</dbReference>
<dbReference type="PROSITE" id="PS51419">
    <property type="entry name" value="RAB"/>
    <property type="match status" value="1"/>
</dbReference>
<sequence length="216" mass="23703">MAHRVDHEYDYLFKIVLIGDSGVGKSNILSRFTRNEFCLESKSTIGVEFATRTLQVEGKTVKAQIWDTAGQERYRAITSAYYRGAVGALLVYDITKRQTFDNVQRWLRELRDHADSNIVIMMAGNKSDLNHLRAVSEDDGGALSEKEGLSFLETSALEATNIEKAFQTILTEIYHIVSKKALAAQEATAGASVPGQGTTINVADTSGNTKKGCCST</sequence>
<organism>
    <name type="scientific">Lotus japonicus</name>
    <name type="common">Lotus corniculatus var. japonicus</name>
    <dbReference type="NCBI Taxonomy" id="34305"/>
    <lineage>
        <taxon>Eukaryota</taxon>
        <taxon>Viridiplantae</taxon>
        <taxon>Streptophyta</taxon>
        <taxon>Embryophyta</taxon>
        <taxon>Tracheophyta</taxon>
        <taxon>Spermatophyta</taxon>
        <taxon>Magnoliopsida</taxon>
        <taxon>eudicotyledons</taxon>
        <taxon>Gunneridae</taxon>
        <taxon>Pentapetalae</taxon>
        <taxon>rosids</taxon>
        <taxon>fabids</taxon>
        <taxon>Fabales</taxon>
        <taxon>Fabaceae</taxon>
        <taxon>Papilionoideae</taxon>
        <taxon>50 kb inversion clade</taxon>
        <taxon>NPAAA clade</taxon>
        <taxon>Hologalegina</taxon>
        <taxon>robinioid clade</taxon>
        <taxon>Loteae</taxon>
        <taxon>Lotus</taxon>
    </lineage>
</organism>
<evidence type="ECO:0000250" key="1"/>
<evidence type="ECO:0000305" key="2"/>
<comment type="subcellular location">
    <subcellularLocation>
        <location evidence="2">Cell membrane</location>
        <topology evidence="2">Lipid-anchor</topology>
        <orientation evidence="2">Cytoplasmic side</orientation>
    </subcellularLocation>
</comment>
<comment type="similarity">
    <text evidence="2">Belongs to the small GTPase superfamily. Rab family.</text>
</comment>
<accession>Q40193</accession>
<name>RB11C_LOTJA</name>
<feature type="chain" id="PRO_0000121169" description="Ras-related protein Rab11C">
    <location>
        <begin position="1"/>
        <end position="216"/>
    </location>
</feature>
<feature type="short sequence motif" description="Effector region" evidence="1">
    <location>
        <begin position="41"/>
        <end position="49"/>
    </location>
</feature>
<feature type="binding site" evidence="1">
    <location>
        <begin position="19"/>
        <end position="26"/>
    </location>
    <ligand>
        <name>GTP</name>
        <dbReference type="ChEBI" id="CHEBI:37565"/>
    </ligand>
</feature>
<feature type="binding site" evidence="1">
    <location>
        <begin position="67"/>
        <end position="71"/>
    </location>
    <ligand>
        <name>GTP</name>
        <dbReference type="ChEBI" id="CHEBI:37565"/>
    </ligand>
</feature>
<feature type="binding site" evidence="1">
    <location>
        <begin position="125"/>
        <end position="128"/>
    </location>
    <ligand>
        <name>GTP</name>
        <dbReference type="ChEBI" id="CHEBI:37565"/>
    </ligand>
</feature>
<feature type="lipid moiety-binding region" description="S-geranylgeranyl cysteine" evidence="1">
    <location>
        <position position="213"/>
    </location>
</feature>
<feature type="lipid moiety-binding region" description="S-geranylgeranyl cysteine" evidence="1">
    <location>
        <position position="214"/>
    </location>
</feature>
<reference key="1">
    <citation type="journal article" date="1997" name="Plant J.">
        <title>Identification of new protein species among 33 different small GTP-binding proteins encoded by cDNAs from Lotus japonicus, and expression of corresponding mRNAs in developing root nodules.</title>
        <authorList>
            <person name="Borg S."/>
            <person name="Brandstrup B."/>
            <person name="Jensen T.J."/>
            <person name="Poulsen C."/>
        </authorList>
    </citation>
    <scope>NUCLEOTIDE SEQUENCE [MRNA]</scope>
    <source>
        <strain>cv. Gifu / B-129</strain>
        <tissue>Root nodule</tissue>
    </source>
</reference>
<keyword id="KW-1003">Cell membrane</keyword>
<keyword id="KW-0342">GTP-binding</keyword>
<keyword id="KW-0449">Lipoprotein</keyword>
<keyword id="KW-0472">Membrane</keyword>
<keyword id="KW-0547">Nucleotide-binding</keyword>
<keyword id="KW-0636">Prenylation</keyword>
<protein>
    <recommendedName>
        <fullName>Ras-related protein Rab11C</fullName>
    </recommendedName>
</protein>